<reference evidence="6" key="1">
    <citation type="journal article" date="2011" name="ACS Chem. Biol.">
        <title>The discovery of cyclotides in the Fabaceae plant family provides new insights into the cyclization, evolution and distribution of circular proteins.</title>
        <authorList>
            <person name="Poth A.G."/>
            <person name="Colgrave M.L."/>
            <person name="Philip R."/>
            <person name="Kerenga B."/>
            <person name="Daly N.L."/>
            <person name="Anderson M."/>
            <person name="Craik D.J."/>
        </authorList>
    </citation>
    <scope>PROTEIN SEQUENCE</scope>
    <scope>PRESENCE OF DISULFIDE BONDS</scope>
    <scope>CYCLIZATION</scope>
    <scope>MASS SPECTROMETRY</scope>
    <source>
        <tissue evidence="2">Seed</tissue>
    </source>
</reference>
<reference key="2">
    <citation type="journal article" date="2016" name="FEBS J.">
        <title>Immunostimulating and Gram-negative-specific antibacterial cyclotides from the butterfly pea Clitoria ternatea.</title>
        <authorList>
            <person name="Nguyen K.N."/>
            <person name="Nguyen G.K."/>
            <person name="Nguyen P.Q."/>
            <person name="Ang K.H."/>
            <person name="Dedon P.C."/>
            <person name="Tam J.P."/>
        </authorList>
    </citation>
    <scope>PROTEIN SEQUENCE</scope>
    <scope>TISSUE SPECIFICITY</scope>
    <scope>CYCLIZATION</scope>
    <scope>PRESENCE OF DISULFIDE BONDS</scope>
    <scope>MASS SPECTROMETRY</scope>
    <scope>IDENTIFICATION BY MASS SPECTROMETRY</scope>
</reference>
<organism>
    <name type="scientific">Clitoria ternatea</name>
    <name type="common">Butterfly pea</name>
    <dbReference type="NCBI Taxonomy" id="43366"/>
    <lineage>
        <taxon>Eukaryota</taxon>
        <taxon>Viridiplantae</taxon>
        <taxon>Streptophyta</taxon>
        <taxon>Embryophyta</taxon>
        <taxon>Tracheophyta</taxon>
        <taxon>Spermatophyta</taxon>
        <taxon>Magnoliopsida</taxon>
        <taxon>eudicotyledons</taxon>
        <taxon>Gunneridae</taxon>
        <taxon>Pentapetalae</taxon>
        <taxon>rosids</taxon>
        <taxon>fabids</taxon>
        <taxon>Fabales</taxon>
        <taxon>Fabaceae</taxon>
        <taxon>Papilionoideae</taxon>
        <taxon>50 kb inversion clade</taxon>
        <taxon>NPAAA clade</taxon>
        <taxon>indigoferoid/millettioid clade</taxon>
        <taxon>Phaseoleae</taxon>
        <taxon>Clitoria</taxon>
    </lineage>
</organism>
<accession>P86849</accession>
<accession>C0HJS4</accession>
<name>CYC17_CLITE</name>
<evidence type="ECO:0000255" key="1">
    <source>
        <dbReference type="PROSITE-ProRule" id="PRU00395"/>
    </source>
</evidence>
<evidence type="ECO:0000269" key="2">
    <source>
    </source>
</evidence>
<evidence type="ECO:0000269" key="3">
    <source>
    </source>
</evidence>
<evidence type="ECO:0000303" key="4">
    <source>
    </source>
</evidence>
<evidence type="ECO:0000303" key="5">
    <source>
    </source>
</evidence>
<evidence type="ECO:0000305" key="6"/>
<sequence length="31" mass="3181">GTVPCGESCVFIPCITGIAGCSCKNKVCYLN</sequence>
<keyword id="KW-0903">Direct protein sequencing</keyword>
<keyword id="KW-1015">Disulfide bond</keyword>
<keyword id="KW-0960">Knottin</keyword>
<keyword id="KW-0611">Plant defense</keyword>
<proteinExistence type="evidence at protein level"/>
<dbReference type="SMR" id="P86849"/>
<dbReference type="GO" id="GO:0006952">
    <property type="term" value="P:defense response"/>
    <property type="evidence" value="ECO:0007669"/>
    <property type="project" value="UniProtKB-KW"/>
</dbReference>
<dbReference type="InterPro" id="IPR005535">
    <property type="entry name" value="Cyclotide"/>
</dbReference>
<dbReference type="InterPro" id="IPR012323">
    <property type="entry name" value="Cyclotide_bracelet_CS"/>
</dbReference>
<dbReference type="InterPro" id="IPR036146">
    <property type="entry name" value="Cyclotide_sf"/>
</dbReference>
<dbReference type="Pfam" id="PF03784">
    <property type="entry name" value="Cyclotide"/>
    <property type="match status" value="1"/>
</dbReference>
<dbReference type="PIRSF" id="PIRSF037891">
    <property type="entry name" value="Cycloviolacin"/>
    <property type="match status" value="1"/>
</dbReference>
<dbReference type="SUPFAM" id="SSF57038">
    <property type="entry name" value="Cyclotides"/>
    <property type="match status" value="1"/>
</dbReference>
<dbReference type="PROSITE" id="PS51052">
    <property type="entry name" value="CYCLOTIDE"/>
    <property type="match status" value="1"/>
</dbReference>
<dbReference type="PROSITE" id="PS60008">
    <property type="entry name" value="CYCLOTIDE_BRACELET"/>
    <property type="match status" value="1"/>
</dbReference>
<feature type="peptide" id="PRO_0000405860" description="Cliotide T17" evidence="2 3">
    <location>
        <begin position="1"/>
        <end position="31"/>
    </location>
</feature>
<feature type="disulfide bond" evidence="1">
    <location>
        <begin position="5"/>
        <end position="21"/>
    </location>
</feature>
<feature type="disulfide bond" evidence="1">
    <location>
        <begin position="9"/>
        <end position="23"/>
    </location>
</feature>
<feature type="disulfide bond" evidence="1">
    <location>
        <begin position="14"/>
        <end position="28"/>
    </location>
</feature>
<feature type="cross-link" description="Cyclopeptide (Gly-Asn)" evidence="3">
    <location>
        <begin position="1"/>
        <end position="31"/>
    </location>
</feature>
<protein>
    <recommendedName>
        <fullName evidence="5">Cliotide T17</fullName>
    </recommendedName>
    <alternativeName>
        <fullName evidence="5">Cyclotide cT17</fullName>
    </alternativeName>
    <alternativeName>
        <fullName evidence="4">Cyclotide cter-I</fullName>
    </alternativeName>
</protein>
<comment type="function">
    <text evidence="1">Probably participates in a plant defense mechanism.</text>
</comment>
<comment type="tissue specificity">
    <text evidence="3">Expressed in root nodules but not in seed.</text>
</comment>
<comment type="domain">
    <text evidence="6">The presence of a 'disulfide through disulfide knot' structurally defines this protein as a knottin.</text>
</comment>
<comment type="PTM">
    <text evidence="2 3">Contains 3 disulfide bonds.</text>
</comment>
<comment type="PTM">
    <text evidence="1 2 3">This is a cyclic peptide.</text>
</comment>
<comment type="mass spectrometry" mass="3153.96" method="Electrospray" evidence="2"/>
<comment type="mass spectrometry" mass="3154.395" method="MALDI" evidence="3"/>
<comment type="similarity">
    <text evidence="1">Belongs to the cyclotide family. Bracelet subfamily.</text>
</comment>